<name>WDR37_MOUSE</name>
<gene>
    <name type="primary">Wdr37</name>
    <name type="synonym">Kiaa0982</name>
</gene>
<comment type="function">
    <text evidence="3">Required for normal ER Ca2+ handling in lymphocytes. Together with PACS1, it plays an essential role in stabilizing peripheral lymphocyte populations.</text>
</comment>
<comment type="subunit">
    <text evidence="1 3">Forms homodimers (By similarity). Interacts with PACS1 (PubMed:33630350). Interacts with PACS2 (By similarity).</text>
</comment>
<comment type="subcellular location">
    <subcellularLocation>
        <location evidence="1">Cytoplasm</location>
    </subcellularLocation>
    <subcellularLocation>
        <location evidence="1">Nucleus</location>
    </subcellularLocation>
    <text evidence="1">Primarily localized in the cytoplasm with the highest concentration in the perinuclear region and in small clusters at the leading edge of the spreading cells.</text>
</comment>
<comment type="disruption phenotype">
    <text evidence="3">Mice lacking WDR37 have reduced absolute numbers of circulating T and B lymphocytes.</text>
</comment>
<comment type="sequence caution" evidence="4">
    <conflict type="erroneous initiation">
        <sequence resource="EMBL-CDS" id="BAC98064"/>
    </conflict>
</comment>
<accession>Q8CBE3</accession>
<accession>Q80Y96</accession>
<accession>Q8CCL2</accession>
<protein>
    <recommendedName>
        <fullName>WD repeat-containing protein 37</fullName>
    </recommendedName>
</protein>
<proteinExistence type="evidence at protein level"/>
<feature type="chain" id="PRO_0000051388" description="WD repeat-containing protein 37">
    <location>
        <begin position="1"/>
        <end position="496"/>
    </location>
</feature>
<feature type="repeat" description="WD 1">
    <location>
        <begin position="154"/>
        <end position="194"/>
    </location>
</feature>
<feature type="repeat" description="WD 2">
    <location>
        <begin position="197"/>
        <end position="236"/>
    </location>
</feature>
<feature type="repeat" description="WD 3">
    <location>
        <begin position="281"/>
        <end position="320"/>
    </location>
</feature>
<feature type="repeat" description="WD 4">
    <location>
        <begin position="323"/>
        <end position="362"/>
    </location>
</feature>
<feature type="repeat" description="WD 5">
    <location>
        <begin position="367"/>
        <end position="405"/>
    </location>
</feature>
<feature type="repeat" description="WD 6">
    <location>
        <begin position="408"/>
        <end position="447"/>
    </location>
</feature>
<feature type="repeat" description="WD 7">
    <location>
        <begin position="454"/>
        <end position="495"/>
    </location>
</feature>
<feature type="region of interest" description="Disordered" evidence="2">
    <location>
        <begin position="1"/>
        <end position="50"/>
    </location>
</feature>
<feature type="region of interest" description="Disordered" evidence="2">
    <location>
        <begin position="238"/>
        <end position="267"/>
    </location>
</feature>
<feature type="compositionally biased region" description="Polar residues" evidence="2">
    <location>
        <begin position="1"/>
        <end position="13"/>
    </location>
</feature>
<feature type="compositionally biased region" description="Polar residues" evidence="2">
    <location>
        <begin position="22"/>
        <end position="31"/>
    </location>
</feature>
<feature type="compositionally biased region" description="Basic and acidic residues" evidence="2">
    <location>
        <begin position="32"/>
        <end position="47"/>
    </location>
</feature>
<feature type="compositionally biased region" description="Acidic residues" evidence="2">
    <location>
        <begin position="247"/>
        <end position="265"/>
    </location>
</feature>
<feature type="mutagenesis site" description="In mouse mutant radical; reduced circulating B cells." evidence="3">
    <location>
        <begin position="182"/>
        <end position="496"/>
    </location>
</feature>
<feature type="sequence conflict" description="In Ref. 2; BAC27934." evidence="4" ref="2">
    <original>F</original>
    <variation>L</variation>
    <location>
        <position position="69"/>
    </location>
</feature>
<feature type="sequence conflict" description="In Ref. 3; AAH46236." evidence="4" ref="3">
    <original>T</original>
    <variation>I</variation>
    <location>
        <position position="139"/>
    </location>
</feature>
<feature type="sequence conflict" description="In Ref. 2; BAC27934." evidence="4" ref="2">
    <original>H</original>
    <variation>N</variation>
    <location>
        <position position="224"/>
    </location>
</feature>
<dbReference type="EMBL" id="AK129254">
    <property type="protein sequence ID" value="BAC98064.1"/>
    <property type="status" value="ALT_INIT"/>
    <property type="molecule type" value="mRNA"/>
</dbReference>
<dbReference type="EMBL" id="AK032582">
    <property type="protein sequence ID" value="BAC27934.1"/>
    <property type="molecule type" value="mRNA"/>
</dbReference>
<dbReference type="EMBL" id="AK036203">
    <property type="protein sequence ID" value="BAC29346.1"/>
    <property type="molecule type" value="mRNA"/>
</dbReference>
<dbReference type="EMBL" id="BC046236">
    <property type="protein sequence ID" value="AAH46236.1"/>
    <property type="molecule type" value="mRNA"/>
</dbReference>
<dbReference type="CCDS" id="CCDS26232.1"/>
<dbReference type="RefSeq" id="NP_001034477.1">
    <property type="nucleotide sequence ID" value="NM_001039388.2"/>
</dbReference>
<dbReference type="RefSeq" id="NP_766033.1">
    <property type="nucleotide sequence ID" value="NM_172445.3"/>
</dbReference>
<dbReference type="RefSeq" id="XP_006516532.1">
    <property type="nucleotide sequence ID" value="XM_006516469.4"/>
</dbReference>
<dbReference type="RefSeq" id="XP_006516533.1">
    <property type="nucleotide sequence ID" value="XM_006516470.3"/>
</dbReference>
<dbReference type="RefSeq" id="XP_036013848.1">
    <property type="nucleotide sequence ID" value="XM_036157955.1"/>
</dbReference>
<dbReference type="SMR" id="Q8CBE3"/>
<dbReference type="BioGRID" id="228908">
    <property type="interactions" value="10"/>
</dbReference>
<dbReference type="FunCoup" id="Q8CBE3">
    <property type="interactions" value="5313"/>
</dbReference>
<dbReference type="IntAct" id="Q8CBE3">
    <property type="interactions" value="3"/>
</dbReference>
<dbReference type="MINT" id="Q8CBE3"/>
<dbReference type="STRING" id="10090.ENSMUSP00000062174"/>
<dbReference type="GlyGen" id="Q8CBE3">
    <property type="glycosylation" value="2 sites, 1 O-linked glycan (2 sites)"/>
</dbReference>
<dbReference type="iPTMnet" id="Q8CBE3"/>
<dbReference type="PhosphoSitePlus" id="Q8CBE3"/>
<dbReference type="SwissPalm" id="Q8CBE3"/>
<dbReference type="jPOST" id="Q8CBE3"/>
<dbReference type="PaxDb" id="10090-ENSMUSP00000021572"/>
<dbReference type="PeptideAtlas" id="Q8CBE3"/>
<dbReference type="ProteomicsDB" id="299744"/>
<dbReference type="Pumba" id="Q8CBE3"/>
<dbReference type="Antibodypedia" id="23814">
    <property type="antibodies" value="150 antibodies from 20 providers"/>
</dbReference>
<dbReference type="DNASU" id="207615"/>
<dbReference type="Ensembl" id="ENSMUST00000021572.11">
    <property type="protein sequence ID" value="ENSMUSP00000021572.5"/>
    <property type="gene ID" value="ENSMUSG00000021147.18"/>
</dbReference>
<dbReference type="Ensembl" id="ENSMUST00000054251.13">
    <property type="protein sequence ID" value="ENSMUSP00000062174.7"/>
    <property type="gene ID" value="ENSMUSG00000021147.18"/>
</dbReference>
<dbReference type="GeneID" id="207615"/>
<dbReference type="KEGG" id="mmu:207615"/>
<dbReference type="UCSC" id="uc007pki.2">
    <property type="organism name" value="mouse"/>
</dbReference>
<dbReference type="AGR" id="MGI:1920393"/>
<dbReference type="CTD" id="22884"/>
<dbReference type="MGI" id="MGI:1920393">
    <property type="gene designation" value="Wdr37"/>
</dbReference>
<dbReference type="VEuPathDB" id="HostDB:ENSMUSG00000021147"/>
<dbReference type="eggNOG" id="KOG0300">
    <property type="taxonomic scope" value="Eukaryota"/>
</dbReference>
<dbReference type="GeneTree" id="ENSGT00930000150950"/>
<dbReference type="HOGENOM" id="CLU_036428_0_0_1"/>
<dbReference type="InParanoid" id="Q8CBE3"/>
<dbReference type="OMA" id="TACIWGV"/>
<dbReference type="OrthoDB" id="9984207at2759"/>
<dbReference type="PhylomeDB" id="Q8CBE3"/>
<dbReference type="TreeFam" id="TF105876"/>
<dbReference type="BioGRID-ORCS" id="207615">
    <property type="hits" value="4 hits in 79 CRISPR screens"/>
</dbReference>
<dbReference type="CD-CODE" id="CE726F99">
    <property type="entry name" value="Postsynaptic density"/>
</dbReference>
<dbReference type="ChiTaRS" id="Wdr37">
    <property type="organism name" value="mouse"/>
</dbReference>
<dbReference type="PRO" id="PR:Q8CBE3"/>
<dbReference type="Proteomes" id="UP000000589">
    <property type="component" value="Chromosome 13"/>
</dbReference>
<dbReference type="RNAct" id="Q8CBE3">
    <property type="molecule type" value="protein"/>
</dbReference>
<dbReference type="Bgee" id="ENSMUSG00000021147">
    <property type="expression patterns" value="Expressed in superior cervical ganglion and 237 other cell types or tissues"/>
</dbReference>
<dbReference type="ExpressionAtlas" id="Q8CBE3">
    <property type="expression patterns" value="baseline and differential"/>
</dbReference>
<dbReference type="GO" id="GO:0005737">
    <property type="term" value="C:cytoplasm"/>
    <property type="evidence" value="ECO:0000250"/>
    <property type="project" value="UniProtKB"/>
</dbReference>
<dbReference type="GO" id="GO:0005634">
    <property type="term" value="C:nucleus"/>
    <property type="evidence" value="ECO:0000250"/>
    <property type="project" value="UniProtKB"/>
</dbReference>
<dbReference type="GO" id="GO:0022038">
    <property type="term" value="P:corpus callosum development"/>
    <property type="evidence" value="ECO:0000315"/>
    <property type="project" value="MGI"/>
</dbReference>
<dbReference type="GO" id="GO:0002260">
    <property type="term" value="P:lymphocyte homeostasis"/>
    <property type="evidence" value="ECO:0000315"/>
    <property type="project" value="UniProtKB"/>
</dbReference>
<dbReference type="CDD" id="cd00200">
    <property type="entry name" value="WD40"/>
    <property type="match status" value="1"/>
</dbReference>
<dbReference type="FunFam" id="2.130.10.10:FF:000511">
    <property type="entry name" value="WD repeat domain 37"/>
    <property type="match status" value="1"/>
</dbReference>
<dbReference type="FunFam" id="2.130.10.10:FF:000080">
    <property type="entry name" value="WD repeat-containing protein 37"/>
    <property type="match status" value="1"/>
</dbReference>
<dbReference type="FunFam" id="2.130.10.10:FF:000152">
    <property type="entry name" value="WD repeat-containing protein 37"/>
    <property type="match status" value="1"/>
</dbReference>
<dbReference type="Gene3D" id="2.130.10.10">
    <property type="entry name" value="YVTN repeat-like/Quinoprotein amine dehydrogenase"/>
    <property type="match status" value="3"/>
</dbReference>
<dbReference type="InterPro" id="IPR020472">
    <property type="entry name" value="G-protein_beta_WD-40_rep"/>
</dbReference>
<dbReference type="InterPro" id="IPR015943">
    <property type="entry name" value="WD40/YVTN_repeat-like_dom_sf"/>
</dbReference>
<dbReference type="InterPro" id="IPR019775">
    <property type="entry name" value="WD40_repeat_CS"/>
</dbReference>
<dbReference type="InterPro" id="IPR036322">
    <property type="entry name" value="WD40_repeat_dom_sf"/>
</dbReference>
<dbReference type="InterPro" id="IPR001680">
    <property type="entry name" value="WD40_rpt"/>
</dbReference>
<dbReference type="PANTHER" id="PTHR19855:SF12">
    <property type="entry name" value="WD REPEAT-CONTAINING PROTEIN 37"/>
    <property type="match status" value="1"/>
</dbReference>
<dbReference type="PANTHER" id="PTHR19855">
    <property type="entry name" value="WD40 REPEAT PROTEIN 12, 37"/>
    <property type="match status" value="1"/>
</dbReference>
<dbReference type="Pfam" id="PF00400">
    <property type="entry name" value="WD40"/>
    <property type="match status" value="6"/>
</dbReference>
<dbReference type="PRINTS" id="PR00320">
    <property type="entry name" value="GPROTEINBRPT"/>
</dbReference>
<dbReference type="SMART" id="SM00320">
    <property type="entry name" value="WD40"/>
    <property type="match status" value="6"/>
</dbReference>
<dbReference type="SUPFAM" id="SSF50978">
    <property type="entry name" value="WD40 repeat-like"/>
    <property type="match status" value="1"/>
</dbReference>
<dbReference type="PROSITE" id="PS00678">
    <property type="entry name" value="WD_REPEATS_1"/>
    <property type="match status" value="2"/>
</dbReference>
<dbReference type="PROSITE" id="PS50082">
    <property type="entry name" value="WD_REPEATS_2"/>
    <property type="match status" value="5"/>
</dbReference>
<dbReference type="PROSITE" id="PS50294">
    <property type="entry name" value="WD_REPEATS_REGION"/>
    <property type="match status" value="1"/>
</dbReference>
<keyword id="KW-0963">Cytoplasm</keyword>
<keyword id="KW-0539">Nucleus</keyword>
<keyword id="KW-1185">Reference proteome</keyword>
<keyword id="KW-0677">Repeat</keyword>
<keyword id="KW-0853">WD repeat</keyword>
<sequence length="496" mass="55046">MPTESGSCSTARQAKQKRKSHSLSIRRTNSSEQERTGLPREMLEGQDSKLPSSVRSTLLELFGQIEREFENLYIENLELRREIDTLNERLAGEGQAIDGAELSKGQLKTKASHSTSQLSQKLKTTYKASTSKIVSSFKTTTSRAICQLVKEYIGHRDGIWDVSVTRTQPIVLGTASADHTALLWSIETGKCLVKYAGHVGSVNSIKFHPSEQLALTASGDQTAHIWRYVVQLPTPQPVADTSQQISGEDEIECSDKDEPDIDGDVSSDCPTVRVPLTSLKSHQGVVIAADWLVGGKQVVTASWDRTANLYDVETSELVHSLTGHDQELTHCCTHPTQRLVVTSSRDTTFRLWDFRDPSIHSVNVFQGHTDTVTSAVFTVGDNVVSGSDDRTVKVWDLKNMRSPIATIRTDSAINRINVCVGQKIIALPHDNRQVRLFDMSGVRLARLPRSSRQGHRRMVCCSAWSEDHPICNLFTCGFDRQAIGWNINIPALLQEK</sequence>
<organism>
    <name type="scientific">Mus musculus</name>
    <name type="common">Mouse</name>
    <dbReference type="NCBI Taxonomy" id="10090"/>
    <lineage>
        <taxon>Eukaryota</taxon>
        <taxon>Metazoa</taxon>
        <taxon>Chordata</taxon>
        <taxon>Craniata</taxon>
        <taxon>Vertebrata</taxon>
        <taxon>Euteleostomi</taxon>
        <taxon>Mammalia</taxon>
        <taxon>Eutheria</taxon>
        <taxon>Euarchontoglires</taxon>
        <taxon>Glires</taxon>
        <taxon>Rodentia</taxon>
        <taxon>Myomorpha</taxon>
        <taxon>Muroidea</taxon>
        <taxon>Muridae</taxon>
        <taxon>Murinae</taxon>
        <taxon>Mus</taxon>
        <taxon>Mus</taxon>
    </lineage>
</organism>
<reference key="1">
    <citation type="journal article" date="2003" name="DNA Res.">
        <title>Prediction of the coding sequences of mouse homologues of KIAA gene: III. The complete nucleotide sequences of 500 mouse KIAA-homologous cDNAs identified by screening of terminal sequences of cDNA clones randomly sampled from size-fractionated libraries.</title>
        <authorList>
            <person name="Okazaki N."/>
            <person name="Kikuno R."/>
            <person name="Ohara R."/>
            <person name="Inamoto S."/>
            <person name="Koseki H."/>
            <person name="Hiraoka S."/>
            <person name="Saga Y."/>
            <person name="Nagase T."/>
            <person name="Ohara O."/>
            <person name="Koga H."/>
        </authorList>
    </citation>
    <scope>NUCLEOTIDE SEQUENCE [LARGE SCALE MRNA]</scope>
    <source>
        <tissue>Embryonic tail</tissue>
    </source>
</reference>
<reference key="2">
    <citation type="journal article" date="2005" name="Science">
        <title>The transcriptional landscape of the mammalian genome.</title>
        <authorList>
            <person name="Carninci P."/>
            <person name="Kasukawa T."/>
            <person name="Katayama S."/>
            <person name="Gough J."/>
            <person name="Frith M.C."/>
            <person name="Maeda N."/>
            <person name="Oyama R."/>
            <person name="Ravasi T."/>
            <person name="Lenhard B."/>
            <person name="Wells C."/>
            <person name="Kodzius R."/>
            <person name="Shimokawa K."/>
            <person name="Bajic V.B."/>
            <person name="Brenner S.E."/>
            <person name="Batalov S."/>
            <person name="Forrest A.R."/>
            <person name="Zavolan M."/>
            <person name="Davis M.J."/>
            <person name="Wilming L.G."/>
            <person name="Aidinis V."/>
            <person name="Allen J.E."/>
            <person name="Ambesi-Impiombato A."/>
            <person name="Apweiler R."/>
            <person name="Aturaliya R.N."/>
            <person name="Bailey T.L."/>
            <person name="Bansal M."/>
            <person name="Baxter L."/>
            <person name="Beisel K.W."/>
            <person name="Bersano T."/>
            <person name="Bono H."/>
            <person name="Chalk A.M."/>
            <person name="Chiu K.P."/>
            <person name="Choudhary V."/>
            <person name="Christoffels A."/>
            <person name="Clutterbuck D.R."/>
            <person name="Crowe M.L."/>
            <person name="Dalla E."/>
            <person name="Dalrymple B.P."/>
            <person name="de Bono B."/>
            <person name="Della Gatta G."/>
            <person name="di Bernardo D."/>
            <person name="Down T."/>
            <person name="Engstrom P."/>
            <person name="Fagiolini M."/>
            <person name="Faulkner G."/>
            <person name="Fletcher C.F."/>
            <person name="Fukushima T."/>
            <person name="Furuno M."/>
            <person name="Futaki S."/>
            <person name="Gariboldi M."/>
            <person name="Georgii-Hemming P."/>
            <person name="Gingeras T.R."/>
            <person name="Gojobori T."/>
            <person name="Green R.E."/>
            <person name="Gustincich S."/>
            <person name="Harbers M."/>
            <person name="Hayashi Y."/>
            <person name="Hensch T.K."/>
            <person name="Hirokawa N."/>
            <person name="Hill D."/>
            <person name="Huminiecki L."/>
            <person name="Iacono M."/>
            <person name="Ikeo K."/>
            <person name="Iwama A."/>
            <person name="Ishikawa T."/>
            <person name="Jakt M."/>
            <person name="Kanapin A."/>
            <person name="Katoh M."/>
            <person name="Kawasawa Y."/>
            <person name="Kelso J."/>
            <person name="Kitamura H."/>
            <person name="Kitano H."/>
            <person name="Kollias G."/>
            <person name="Krishnan S.P."/>
            <person name="Kruger A."/>
            <person name="Kummerfeld S.K."/>
            <person name="Kurochkin I.V."/>
            <person name="Lareau L.F."/>
            <person name="Lazarevic D."/>
            <person name="Lipovich L."/>
            <person name="Liu J."/>
            <person name="Liuni S."/>
            <person name="McWilliam S."/>
            <person name="Madan Babu M."/>
            <person name="Madera M."/>
            <person name="Marchionni L."/>
            <person name="Matsuda H."/>
            <person name="Matsuzawa S."/>
            <person name="Miki H."/>
            <person name="Mignone F."/>
            <person name="Miyake S."/>
            <person name="Morris K."/>
            <person name="Mottagui-Tabar S."/>
            <person name="Mulder N."/>
            <person name="Nakano N."/>
            <person name="Nakauchi H."/>
            <person name="Ng P."/>
            <person name="Nilsson R."/>
            <person name="Nishiguchi S."/>
            <person name="Nishikawa S."/>
            <person name="Nori F."/>
            <person name="Ohara O."/>
            <person name="Okazaki Y."/>
            <person name="Orlando V."/>
            <person name="Pang K.C."/>
            <person name="Pavan W.J."/>
            <person name="Pavesi G."/>
            <person name="Pesole G."/>
            <person name="Petrovsky N."/>
            <person name="Piazza S."/>
            <person name="Reed J."/>
            <person name="Reid J.F."/>
            <person name="Ring B.Z."/>
            <person name="Ringwald M."/>
            <person name="Rost B."/>
            <person name="Ruan Y."/>
            <person name="Salzberg S.L."/>
            <person name="Sandelin A."/>
            <person name="Schneider C."/>
            <person name="Schoenbach C."/>
            <person name="Sekiguchi K."/>
            <person name="Semple C.A."/>
            <person name="Seno S."/>
            <person name="Sessa L."/>
            <person name="Sheng Y."/>
            <person name="Shibata Y."/>
            <person name="Shimada H."/>
            <person name="Shimada K."/>
            <person name="Silva D."/>
            <person name="Sinclair B."/>
            <person name="Sperling S."/>
            <person name="Stupka E."/>
            <person name="Sugiura K."/>
            <person name="Sultana R."/>
            <person name="Takenaka Y."/>
            <person name="Taki K."/>
            <person name="Tammoja K."/>
            <person name="Tan S.L."/>
            <person name="Tang S."/>
            <person name="Taylor M.S."/>
            <person name="Tegner J."/>
            <person name="Teichmann S.A."/>
            <person name="Ueda H.R."/>
            <person name="van Nimwegen E."/>
            <person name="Verardo R."/>
            <person name="Wei C.L."/>
            <person name="Yagi K."/>
            <person name="Yamanishi H."/>
            <person name="Zabarovsky E."/>
            <person name="Zhu S."/>
            <person name="Zimmer A."/>
            <person name="Hide W."/>
            <person name="Bult C."/>
            <person name="Grimmond S.M."/>
            <person name="Teasdale R.D."/>
            <person name="Liu E.T."/>
            <person name="Brusic V."/>
            <person name="Quackenbush J."/>
            <person name="Wahlestedt C."/>
            <person name="Mattick J.S."/>
            <person name="Hume D.A."/>
            <person name="Kai C."/>
            <person name="Sasaki D."/>
            <person name="Tomaru Y."/>
            <person name="Fukuda S."/>
            <person name="Kanamori-Katayama M."/>
            <person name="Suzuki M."/>
            <person name="Aoki J."/>
            <person name="Arakawa T."/>
            <person name="Iida J."/>
            <person name="Imamura K."/>
            <person name="Itoh M."/>
            <person name="Kato T."/>
            <person name="Kawaji H."/>
            <person name="Kawagashira N."/>
            <person name="Kawashima T."/>
            <person name="Kojima M."/>
            <person name="Kondo S."/>
            <person name="Konno H."/>
            <person name="Nakano K."/>
            <person name="Ninomiya N."/>
            <person name="Nishio T."/>
            <person name="Okada M."/>
            <person name="Plessy C."/>
            <person name="Shibata K."/>
            <person name="Shiraki T."/>
            <person name="Suzuki S."/>
            <person name="Tagami M."/>
            <person name="Waki K."/>
            <person name="Watahiki A."/>
            <person name="Okamura-Oho Y."/>
            <person name="Suzuki H."/>
            <person name="Kawai J."/>
            <person name="Hayashizaki Y."/>
        </authorList>
    </citation>
    <scope>NUCLEOTIDE SEQUENCE [LARGE SCALE MRNA]</scope>
    <source>
        <strain>C57BL/6J</strain>
        <tissue>Cerebellum</tissue>
        <tissue>Olfactory bulb</tissue>
    </source>
</reference>
<reference key="3">
    <citation type="journal article" date="2004" name="Genome Res.">
        <title>The status, quality, and expansion of the NIH full-length cDNA project: the Mammalian Gene Collection (MGC).</title>
        <authorList>
            <consortium name="The MGC Project Team"/>
        </authorList>
    </citation>
    <scope>NUCLEOTIDE SEQUENCE [LARGE SCALE MRNA]</scope>
    <source>
        <strain>C57BL/6J</strain>
        <tissue>Brain</tissue>
    </source>
</reference>
<reference key="4">
    <citation type="journal article" date="2010" name="Cell">
        <title>A tissue-specific atlas of mouse protein phosphorylation and expression.</title>
        <authorList>
            <person name="Huttlin E.L."/>
            <person name="Jedrychowski M.P."/>
            <person name="Elias J.E."/>
            <person name="Goswami T."/>
            <person name="Rad R."/>
            <person name="Beausoleil S.A."/>
            <person name="Villen J."/>
            <person name="Haas W."/>
            <person name="Sowa M.E."/>
            <person name="Gygi S.P."/>
        </authorList>
    </citation>
    <scope>IDENTIFICATION BY MASS SPECTROMETRY [LARGE SCALE ANALYSIS]</scope>
    <source>
        <tissue>Brain</tissue>
        <tissue>Brown adipose tissue</tissue>
        <tissue>Heart</tissue>
        <tissue>Kidney</tissue>
        <tissue>Lung</tissue>
        <tissue>Pancreas</tissue>
        <tissue>Spleen</tissue>
        <tissue>Testis</tissue>
    </source>
</reference>
<reference key="5">
    <citation type="journal article" date="2021" name="EMBO J.">
        <title>Calcium flux control by Pacs1-Wdr37 promotes lymphocyte quiescence and lymphoproliferative diseases.</title>
        <authorList>
            <person name="Nair-Gill E."/>
            <person name="Bonora M."/>
            <person name="Zhong X."/>
            <person name="Liu A."/>
            <person name="Miranda A."/>
            <person name="Stewart N."/>
            <person name="Ludwig S."/>
            <person name="Russell J."/>
            <person name="Gallagher T."/>
            <person name="Pinton P."/>
            <person name="Beutler B."/>
        </authorList>
    </citation>
    <scope>FUNCTION</scope>
    <scope>DISRUPTION PHENOTYPE</scope>
    <scope>INTERACTION WITH PACS1</scope>
    <scope>MUTAGENESIS OF 182-LEU--LYS-496</scope>
</reference>
<evidence type="ECO:0000250" key="1">
    <source>
        <dbReference type="UniProtKB" id="Q9Y2I8"/>
    </source>
</evidence>
<evidence type="ECO:0000256" key="2">
    <source>
        <dbReference type="SAM" id="MobiDB-lite"/>
    </source>
</evidence>
<evidence type="ECO:0000269" key="3">
    <source>
    </source>
</evidence>
<evidence type="ECO:0000305" key="4"/>